<name>TRPF_CHLCV</name>
<comment type="catalytic activity">
    <reaction evidence="1">
        <text>N-(5-phospho-beta-D-ribosyl)anthranilate = 1-(2-carboxyphenylamino)-1-deoxy-D-ribulose 5-phosphate</text>
        <dbReference type="Rhea" id="RHEA:21540"/>
        <dbReference type="ChEBI" id="CHEBI:18277"/>
        <dbReference type="ChEBI" id="CHEBI:58613"/>
        <dbReference type="EC" id="5.3.1.24"/>
    </reaction>
</comment>
<comment type="pathway">
    <text evidence="1">Amino-acid biosynthesis; L-tryptophan biosynthesis; L-tryptophan from chorismate: step 3/5.</text>
</comment>
<comment type="similarity">
    <text evidence="1">Belongs to the TrpF family.</text>
</comment>
<organism>
    <name type="scientific">Chlamydia caviae (strain ATCC VR-813 / DSM 19441 / 03DC25 / GPIC)</name>
    <name type="common">Chlamydophila caviae</name>
    <dbReference type="NCBI Taxonomy" id="227941"/>
    <lineage>
        <taxon>Bacteria</taxon>
        <taxon>Pseudomonadati</taxon>
        <taxon>Chlamydiota</taxon>
        <taxon>Chlamydiia</taxon>
        <taxon>Chlamydiales</taxon>
        <taxon>Chlamydiaceae</taxon>
        <taxon>Chlamydia/Chlamydophila group</taxon>
        <taxon>Chlamydia</taxon>
    </lineage>
</organism>
<gene>
    <name evidence="1" type="primary">trpF</name>
    <name type="ordered locus">CCA_00565</name>
</gene>
<protein>
    <recommendedName>
        <fullName evidence="1">N-(5'-phosphoribosyl)anthranilate isomerase</fullName>
        <shortName evidence="1">PRAI</shortName>
        <ecNumber evidence="1">5.3.1.24</ecNumber>
    </recommendedName>
</protein>
<evidence type="ECO:0000255" key="1">
    <source>
        <dbReference type="HAMAP-Rule" id="MF_00135"/>
    </source>
</evidence>
<dbReference type="EC" id="5.3.1.24" evidence="1"/>
<dbReference type="EMBL" id="AE015925">
    <property type="protein sequence ID" value="AAP05307.1"/>
    <property type="molecule type" value="Genomic_DNA"/>
</dbReference>
<dbReference type="RefSeq" id="WP_011006522.1">
    <property type="nucleotide sequence ID" value="NC_003361.3"/>
</dbReference>
<dbReference type="SMR" id="Q822W4"/>
<dbReference type="STRING" id="227941.CCA_00565"/>
<dbReference type="KEGG" id="cca:CCA_00565"/>
<dbReference type="eggNOG" id="COG0135">
    <property type="taxonomic scope" value="Bacteria"/>
</dbReference>
<dbReference type="HOGENOM" id="CLU_076364_0_1_0"/>
<dbReference type="OrthoDB" id="9786954at2"/>
<dbReference type="UniPathway" id="UPA00035">
    <property type="reaction ID" value="UER00042"/>
</dbReference>
<dbReference type="Proteomes" id="UP000002193">
    <property type="component" value="Chromosome"/>
</dbReference>
<dbReference type="GO" id="GO:0004640">
    <property type="term" value="F:phosphoribosylanthranilate isomerase activity"/>
    <property type="evidence" value="ECO:0007669"/>
    <property type="project" value="UniProtKB-UniRule"/>
</dbReference>
<dbReference type="GO" id="GO:0000162">
    <property type="term" value="P:L-tryptophan biosynthetic process"/>
    <property type="evidence" value="ECO:0007669"/>
    <property type="project" value="UniProtKB-UniRule"/>
</dbReference>
<dbReference type="CDD" id="cd00405">
    <property type="entry name" value="PRAI"/>
    <property type="match status" value="1"/>
</dbReference>
<dbReference type="Gene3D" id="3.20.20.70">
    <property type="entry name" value="Aldolase class I"/>
    <property type="match status" value="1"/>
</dbReference>
<dbReference type="HAMAP" id="MF_00135">
    <property type="entry name" value="PRAI"/>
    <property type="match status" value="1"/>
</dbReference>
<dbReference type="InterPro" id="IPR013785">
    <property type="entry name" value="Aldolase_TIM"/>
</dbReference>
<dbReference type="InterPro" id="IPR001240">
    <property type="entry name" value="PRAI_dom"/>
</dbReference>
<dbReference type="InterPro" id="IPR011060">
    <property type="entry name" value="RibuloseP-bd_barrel"/>
</dbReference>
<dbReference type="InterPro" id="IPR044643">
    <property type="entry name" value="TrpF_fam"/>
</dbReference>
<dbReference type="NCBIfam" id="NF002303">
    <property type="entry name" value="PRK01222.2-3"/>
    <property type="match status" value="1"/>
</dbReference>
<dbReference type="PANTHER" id="PTHR42894">
    <property type="entry name" value="N-(5'-PHOSPHORIBOSYL)ANTHRANILATE ISOMERASE"/>
    <property type="match status" value="1"/>
</dbReference>
<dbReference type="PANTHER" id="PTHR42894:SF1">
    <property type="entry name" value="N-(5'-PHOSPHORIBOSYL)ANTHRANILATE ISOMERASE"/>
    <property type="match status" value="1"/>
</dbReference>
<dbReference type="Pfam" id="PF00697">
    <property type="entry name" value="PRAI"/>
    <property type="match status" value="1"/>
</dbReference>
<dbReference type="SUPFAM" id="SSF51366">
    <property type="entry name" value="Ribulose-phoshate binding barrel"/>
    <property type="match status" value="1"/>
</dbReference>
<feature type="chain" id="PRO_0000154352" description="N-(5'-phosphoribosyl)anthranilate isomerase">
    <location>
        <begin position="1"/>
        <end position="206"/>
    </location>
</feature>
<sequence>MKVKICGVTHPEDAEYAALLGADYIGVIFAEKSKRKTSLSMAKSIADTTKRLGAEPVGVFVEQTTDQIIAICEQTGIKTIQLHSTFPLGALENLLRDYSIIYAISVRENGDVCHPQSLPPKVIPLYDTEKGGTGKQFNWKAFSLPKDTFWMLAGGLNPKNIEEAVATLHPNGVDVATGVEFPNKTRKDPDLLKAFILSAKKSGEKI</sequence>
<keyword id="KW-0028">Amino-acid biosynthesis</keyword>
<keyword id="KW-0057">Aromatic amino acid biosynthesis</keyword>
<keyword id="KW-0413">Isomerase</keyword>
<keyword id="KW-0822">Tryptophan biosynthesis</keyword>
<accession>Q822W4</accession>
<proteinExistence type="inferred from homology"/>
<reference key="1">
    <citation type="journal article" date="2003" name="Nucleic Acids Res.">
        <title>Genome sequence of Chlamydophila caviae (Chlamydia psittaci GPIC): examining the role of niche-specific genes in the evolution of the Chlamydiaceae.</title>
        <authorList>
            <person name="Read T.D."/>
            <person name="Myers G.S.A."/>
            <person name="Brunham R.C."/>
            <person name="Nelson W.C."/>
            <person name="Paulsen I.T."/>
            <person name="Heidelberg J.F."/>
            <person name="Holtzapple E.K."/>
            <person name="Khouri H.M."/>
            <person name="Federova N.B."/>
            <person name="Carty H.A."/>
            <person name="Umayam L.A."/>
            <person name="Haft D.H."/>
            <person name="Peterson J.D."/>
            <person name="Beanan M.J."/>
            <person name="White O."/>
            <person name="Salzberg S.L."/>
            <person name="Hsia R.-C."/>
            <person name="McClarty G."/>
            <person name="Rank R.G."/>
            <person name="Bavoil P.M."/>
            <person name="Fraser C.M."/>
        </authorList>
    </citation>
    <scope>NUCLEOTIDE SEQUENCE [LARGE SCALE GENOMIC DNA]</scope>
    <source>
        <strain>ATCC VR-813 / DSM 19441 / 03DC25 / GPIC</strain>
    </source>
</reference>